<accession>Q98EY9</accession>
<feature type="chain" id="PRO_0000270718" description="Large ribosomal subunit protein bL21">
    <location>
        <begin position="1"/>
        <end position="223"/>
    </location>
</feature>
<gene>
    <name evidence="1" type="primary">rplU</name>
    <name type="ordered locus">mll4019</name>
</gene>
<evidence type="ECO:0000255" key="1">
    <source>
        <dbReference type="HAMAP-Rule" id="MF_01363"/>
    </source>
</evidence>
<evidence type="ECO:0000305" key="2"/>
<proteinExistence type="inferred from homology"/>
<dbReference type="EMBL" id="BA000012">
    <property type="protein sequence ID" value="BAB50778.1"/>
    <property type="molecule type" value="Genomic_DNA"/>
</dbReference>
<dbReference type="RefSeq" id="WP_010912121.1">
    <property type="nucleotide sequence ID" value="NC_002678.2"/>
</dbReference>
<dbReference type="SMR" id="Q98EY9"/>
<dbReference type="KEGG" id="mlo:mll4019"/>
<dbReference type="eggNOG" id="COG0261">
    <property type="taxonomic scope" value="Bacteria"/>
</dbReference>
<dbReference type="eggNOG" id="COG3743">
    <property type="taxonomic scope" value="Bacteria"/>
</dbReference>
<dbReference type="HOGENOM" id="CLU_061463_1_0_5"/>
<dbReference type="Proteomes" id="UP000000552">
    <property type="component" value="Chromosome"/>
</dbReference>
<dbReference type="GO" id="GO:0005737">
    <property type="term" value="C:cytoplasm"/>
    <property type="evidence" value="ECO:0007669"/>
    <property type="project" value="UniProtKB-ARBA"/>
</dbReference>
<dbReference type="GO" id="GO:1990904">
    <property type="term" value="C:ribonucleoprotein complex"/>
    <property type="evidence" value="ECO:0007669"/>
    <property type="project" value="UniProtKB-KW"/>
</dbReference>
<dbReference type="GO" id="GO:0005840">
    <property type="term" value="C:ribosome"/>
    <property type="evidence" value="ECO:0007669"/>
    <property type="project" value="UniProtKB-KW"/>
</dbReference>
<dbReference type="GO" id="GO:0019843">
    <property type="term" value="F:rRNA binding"/>
    <property type="evidence" value="ECO:0007669"/>
    <property type="project" value="UniProtKB-UniRule"/>
</dbReference>
<dbReference type="GO" id="GO:0003735">
    <property type="term" value="F:structural constituent of ribosome"/>
    <property type="evidence" value="ECO:0007669"/>
    <property type="project" value="InterPro"/>
</dbReference>
<dbReference type="GO" id="GO:0006412">
    <property type="term" value="P:translation"/>
    <property type="evidence" value="ECO:0007669"/>
    <property type="project" value="UniProtKB-UniRule"/>
</dbReference>
<dbReference type="Gene3D" id="1.10.150.20">
    <property type="entry name" value="5' to 3' exonuclease, C-terminal subdomain"/>
    <property type="match status" value="1"/>
</dbReference>
<dbReference type="HAMAP" id="MF_01363">
    <property type="entry name" value="Ribosomal_bL21"/>
    <property type="match status" value="1"/>
</dbReference>
<dbReference type="InterPro" id="IPR028909">
    <property type="entry name" value="bL21-like"/>
</dbReference>
<dbReference type="InterPro" id="IPR036164">
    <property type="entry name" value="bL21-like_sf"/>
</dbReference>
<dbReference type="InterPro" id="IPR001787">
    <property type="entry name" value="Ribosomal_bL21"/>
</dbReference>
<dbReference type="NCBIfam" id="TIGR00061">
    <property type="entry name" value="L21"/>
    <property type="match status" value="1"/>
</dbReference>
<dbReference type="NCBIfam" id="NF008916">
    <property type="entry name" value="PRK12278.1-4"/>
    <property type="match status" value="1"/>
</dbReference>
<dbReference type="PANTHER" id="PTHR21349">
    <property type="entry name" value="50S RIBOSOMAL PROTEIN L21"/>
    <property type="match status" value="1"/>
</dbReference>
<dbReference type="PANTHER" id="PTHR21349:SF0">
    <property type="entry name" value="LARGE RIBOSOMAL SUBUNIT PROTEIN BL21M"/>
    <property type="match status" value="1"/>
</dbReference>
<dbReference type="Pfam" id="PF00829">
    <property type="entry name" value="Ribosomal_L21p"/>
    <property type="match status" value="1"/>
</dbReference>
<dbReference type="SUPFAM" id="SSF141091">
    <property type="entry name" value="L21p-like"/>
    <property type="match status" value="1"/>
</dbReference>
<reference key="1">
    <citation type="journal article" date="2000" name="DNA Res.">
        <title>Complete genome structure of the nitrogen-fixing symbiotic bacterium Mesorhizobium loti.</title>
        <authorList>
            <person name="Kaneko T."/>
            <person name="Nakamura Y."/>
            <person name="Sato S."/>
            <person name="Asamizu E."/>
            <person name="Kato T."/>
            <person name="Sasamoto S."/>
            <person name="Watanabe A."/>
            <person name="Idesawa K."/>
            <person name="Ishikawa A."/>
            <person name="Kawashima K."/>
            <person name="Kimura T."/>
            <person name="Kishida Y."/>
            <person name="Kiyokawa C."/>
            <person name="Kohara M."/>
            <person name="Matsumoto M."/>
            <person name="Matsuno A."/>
            <person name="Mochizuki Y."/>
            <person name="Nakayama S."/>
            <person name="Nakazaki N."/>
            <person name="Shimpo S."/>
            <person name="Sugimoto M."/>
            <person name="Takeuchi C."/>
            <person name="Yamada M."/>
            <person name="Tabata S."/>
        </authorList>
    </citation>
    <scope>NUCLEOTIDE SEQUENCE [LARGE SCALE GENOMIC DNA]</scope>
    <source>
        <strain>LMG 29417 / CECT 9101 / MAFF 303099</strain>
    </source>
</reference>
<keyword id="KW-0687">Ribonucleoprotein</keyword>
<keyword id="KW-0689">Ribosomal protein</keyword>
<keyword id="KW-0694">RNA-binding</keyword>
<keyword id="KW-0699">rRNA-binding</keyword>
<protein>
    <recommendedName>
        <fullName evidence="1">Large ribosomal subunit protein bL21</fullName>
    </recommendedName>
    <alternativeName>
        <fullName evidence="2">50S ribosomal protein L21</fullName>
    </alternativeName>
</protein>
<sequence length="223" mass="23945">MFAVIKTGGKQYRVAANDLLKIEKVEANVGDIVEIGHVLAHGEGENVTFGAPFVDGALVTAEVVEQGKNRTVIAFKKRRRQNSRRKIGHRQLLTTVRISEILLGGAKPAKKAAVKAEAKAEVAAEAAPKEAKAKKEAAPKADVTAETAAAPLFKAPKGEPDDLTVIKGIGPVAAKDLNEQGIITFAQLAKLTDKDVAKIDEHMPFSADQIKDWREQAKELAKK</sequence>
<organism>
    <name type="scientific">Mesorhizobium japonicum (strain LMG 29417 / CECT 9101 / MAFF 303099)</name>
    <name type="common">Mesorhizobium loti (strain MAFF 303099)</name>
    <dbReference type="NCBI Taxonomy" id="266835"/>
    <lineage>
        <taxon>Bacteria</taxon>
        <taxon>Pseudomonadati</taxon>
        <taxon>Pseudomonadota</taxon>
        <taxon>Alphaproteobacteria</taxon>
        <taxon>Hyphomicrobiales</taxon>
        <taxon>Phyllobacteriaceae</taxon>
        <taxon>Mesorhizobium</taxon>
    </lineage>
</organism>
<name>RL21_RHILO</name>
<comment type="function">
    <text evidence="1">This protein binds to 23S rRNA in the presence of protein L20.</text>
</comment>
<comment type="subunit">
    <text evidence="1">Part of the 50S ribosomal subunit. Contacts protein L20.</text>
</comment>
<comment type="similarity">
    <text evidence="1">Belongs to the bacterial ribosomal protein bL21 family.</text>
</comment>